<protein>
    <recommendedName>
        <fullName>Uronate isomerase</fullName>
        <ecNumber>5.3.1.12</ecNumber>
    </recommendedName>
    <alternativeName>
        <fullName>Glucuronate isomerase</fullName>
    </alternativeName>
    <alternativeName>
        <fullName>Uronic isomerase</fullName>
    </alternativeName>
</protein>
<name>UXAC_BACSU</name>
<organism>
    <name type="scientific">Bacillus subtilis (strain 168)</name>
    <dbReference type="NCBI Taxonomy" id="224308"/>
    <lineage>
        <taxon>Bacteria</taxon>
        <taxon>Bacillati</taxon>
        <taxon>Bacillota</taxon>
        <taxon>Bacilli</taxon>
        <taxon>Bacillales</taxon>
        <taxon>Bacillaceae</taxon>
        <taxon>Bacillus</taxon>
    </lineage>
</organism>
<keyword id="KW-0413">Isomerase</keyword>
<keyword id="KW-1185">Reference proteome</keyword>
<gene>
    <name type="primary">uxaC</name>
    <name type="synonym">yjmA</name>
    <name type="ordered locus">BSU12300</name>
</gene>
<comment type="catalytic activity">
    <reaction>
        <text>D-glucuronate = D-fructuronate</text>
        <dbReference type="Rhea" id="RHEA:13049"/>
        <dbReference type="ChEBI" id="CHEBI:58720"/>
        <dbReference type="ChEBI" id="CHEBI:59863"/>
        <dbReference type="EC" id="5.3.1.12"/>
    </reaction>
</comment>
<comment type="catalytic activity">
    <reaction>
        <text>aldehydo-D-galacturonate = keto-D-tagaturonate</text>
        <dbReference type="Rhea" id="RHEA:27702"/>
        <dbReference type="ChEBI" id="CHEBI:12952"/>
        <dbReference type="ChEBI" id="CHEBI:17886"/>
        <dbReference type="EC" id="5.3.1.12"/>
    </reaction>
</comment>
<comment type="pathway">
    <text>Carbohydrate metabolism; pentose and glucuronate interconversion.</text>
</comment>
<comment type="induction">
    <text evidence="1">Induced by galacturonate, repressed by glucose.</text>
</comment>
<comment type="miscellaneous">
    <text>Member of the exu locus which is required for galacturonate utilization.</text>
</comment>
<comment type="similarity">
    <text evidence="2">Belongs to the metallo-dependent hydrolases superfamily. Uronate isomerase family.</text>
</comment>
<dbReference type="EC" id="5.3.1.12"/>
<dbReference type="EMBL" id="AF015825">
    <property type="protein sequence ID" value="AAC46326.1"/>
    <property type="molecule type" value="Genomic_DNA"/>
</dbReference>
<dbReference type="EMBL" id="AL009126">
    <property type="protein sequence ID" value="CAB13087.1"/>
    <property type="molecule type" value="Genomic_DNA"/>
</dbReference>
<dbReference type="PIR" id="C69852">
    <property type="entry name" value="C69852"/>
</dbReference>
<dbReference type="RefSeq" id="NP_389112.1">
    <property type="nucleotide sequence ID" value="NC_000964.3"/>
</dbReference>
<dbReference type="RefSeq" id="WP_003245001.1">
    <property type="nucleotide sequence ID" value="NZ_OZ025638.1"/>
</dbReference>
<dbReference type="SMR" id="O34808"/>
<dbReference type="FunCoup" id="O34808">
    <property type="interactions" value="231"/>
</dbReference>
<dbReference type="STRING" id="224308.BSU12300"/>
<dbReference type="PaxDb" id="224308-BSU12300"/>
<dbReference type="EnsemblBacteria" id="CAB13087">
    <property type="protein sequence ID" value="CAB13087"/>
    <property type="gene ID" value="BSU_12300"/>
</dbReference>
<dbReference type="GeneID" id="936461"/>
<dbReference type="KEGG" id="bsu:BSU12300"/>
<dbReference type="PATRIC" id="fig|224308.179.peg.1331"/>
<dbReference type="eggNOG" id="COG1904">
    <property type="taxonomic scope" value="Bacteria"/>
</dbReference>
<dbReference type="InParanoid" id="O34808"/>
<dbReference type="OrthoDB" id="9766564at2"/>
<dbReference type="PhylomeDB" id="O34808"/>
<dbReference type="BioCyc" id="BSUB:BSU12300-MONOMER"/>
<dbReference type="UniPathway" id="UPA00246"/>
<dbReference type="Proteomes" id="UP000001570">
    <property type="component" value="Chromosome"/>
</dbReference>
<dbReference type="GO" id="GO:0008880">
    <property type="term" value="F:glucuronate isomerase activity"/>
    <property type="evidence" value="ECO:0007669"/>
    <property type="project" value="UniProtKB-UniRule"/>
</dbReference>
<dbReference type="GO" id="GO:0019698">
    <property type="term" value="P:D-galacturonate catabolic process"/>
    <property type="evidence" value="ECO:0000318"/>
    <property type="project" value="GO_Central"/>
</dbReference>
<dbReference type="GO" id="GO:0042840">
    <property type="term" value="P:D-glucuronate catabolic process"/>
    <property type="evidence" value="ECO:0000318"/>
    <property type="project" value="GO_Central"/>
</dbReference>
<dbReference type="Gene3D" id="3.20.20.140">
    <property type="entry name" value="Metal-dependent hydrolases"/>
    <property type="match status" value="1"/>
</dbReference>
<dbReference type="Gene3D" id="1.10.2020.10">
    <property type="entry name" value="uronate isomerase, domain 2, chain A"/>
    <property type="match status" value="1"/>
</dbReference>
<dbReference type="HAMAP" id="MF_00675">
    <property type="entry name" value="UxaC"/>
    <property type="match status" value="1"/>
</dbReference>
<dbReference type="InterPro" id="IPR032466">
    <property type="entry name" value="Metal_Hydrolase"/>
</dbReference>
<dbReference type="InterPro" id="IPR003766">
    <property type="entry name" value="Uronate_isomerase"/>
</dbReference>
<dbReference type="NCBIfam" id="NF002794">
    <property type="entry name" value="PRK02925.1"/>
    <property type="match status" value="1"/>
</dbReference>
<dbReference type="PANTHER" id="PTHR30068">
    <property type="entry name" value="URONATE ISOMERASE"/>
    <property type="match status" value="1"/>
</dbReference>
<dbReference type="PANTHER" id="PTHR30068:SF4">
    <property type="entry name" value="URONATE ISOMERASE"/>
    <property type="match status" value="1"/>
</dbReference>
<dbReference type="Pfam" id="PF02614">
    <property type="entry name" value="UxaC"/>
    <property type="match status" value="1"/>
</dbReference>
<dbReference type="SUPFAM" id="SSF51556">
    <property type="entry name" value="Metallo-dependent hydrolases"/>
    <property type="match status" value="1"/>
</dbReference>
<sequence>MEPFMGKNFLLKNETAVSLYHNYAKDMPIIDYHCHLSPKEIYENKTFQNITEAWLYGDHYKWRIMRANGIEETYITGDAPDEEKFMAWAKTVPMAIGNPLYNWTHLELQRFFGIYEILNEKSGSAIWKQTNKLLKGEGFGARDLIVKSNVKVVCTTDDPVDSLEYHLLLKEDKDFPVSVLPGFRPDKGLEINREGFPEWVQALEDAAAISITTYDEFLKALEKRVRFFHSAGGRVSDHAIDTMVFAETTKEEAGRIFSDRLQGTEVSCEDEKKFKTYTLQFLCGLYAELDWAMQFHINALRNTNTKMMKRLGPDTGYDSMNDEEIAKPLYKLLNSVEMKNQLPKTILYSLNPNDNYVIASMINSFQDGITPGKIQFGTAWWFNDTKDGMLDQMKALSNVGLFSRFIGMLTDSRSFLSYTRHEYFRRIVCNLIGEWVENGEVPRDMELLGSIVQGICYDNAKHYFQFQEEKANV</sequence>
<feature type="chain" id="PRO_0000172762" description="Uronate isomerase">
    <location>
        <begin position="1"/>
        <end position="473"/>
    </location>
</feature>
<evidence type="ECO:0000269" key="1">
    <source>
    </source>
</evidence>
<evidence type="ECO:0000305" key="2"/>
<proteinExistence type="evidence at transcript level"/>
<reference key="1">
    <citation type="journal article" date="1998" name="Microbiology">
        <title>A 35.7 kb DNA fragment from the Bacillus subtilis chromosome containing a putative 12.3 kb operon involved in hexuronate catabolism and a perfectly symmetrical hypothetical catabolite-responsive element.</title>
        <authorList>
            <person name="Rivolta C."/>
            <person name="Soldo B."/>
            <person name="Lazarevic V."/>
            <person name="Joris B."/>
            <person name="Mauel C."/>
            <person name="Karamata D."/>
        </authorList>
    </citation>
    <scope>NUCLEOTIDE SEQUENCE [GENOMIC DNA]</scope>
    <scope>PROBABLE OPERON STRUCTURE</scope>
    <source>
        <strain>168</strain>
    </source>
</reference>
<reference key="2">
    <citation type="journal article" date="1997" name="Nature">
        <title>The complete genome sequence of the Gram-positive bacterium Bacillus subtilis.</title>
        <authorList>
            <person name="Kunst F."/>
            <person name="Ogasawara N."/>
            <person name="Moszer I."/>
            <person name="Albertini A.M."/>
            <person name="Alloni G."/>
            <person name="Azevedo V."/>
            <person name="Bertero M.G."/>
            <person name="Bessieres P."/>
            <person name="Bolotin A."/>
            <person name="Borchert S."/>
            <person name="Borriss R."/>
            <person name="Boursier L."/>
            <person name="Brans A."/>
            <person name="Braun M."/>
            <person name="Brignell S.C."/>
            <person name="Bron S."/>
            <person name="Brouillet S."/>
            <person name="Bruschi C.V."/>
            <person name="Caldwell B."/>
            <person name="Capuano V."/>
            <person name="Carter N.M."/>
            <person name="Choi S.-K."/>
            <person name="Codani J.-J."/>
            <person name="Connerton I.F."/>
            <person name="Cummings N.J."/>
            <person name="Daniel R.A."/>
            <person name="Denizot F."/>
            <person name="Devine K.M."/>
            <person name="Duesterhoeft A."/>
            <person name="Ehrlich S.D."/>
            <person name="Emmerson P.T."/>
            <person name="Entian K.-D."/>
            <person name="Errington J."/>
            <person name="Fabret C."/>
            <person name="Ferrari E."/>
            <person name="Foulger D."/>
            <person name="Fritz C."/>
            <person name="Fujita M."/>
            <person name="Fujita Y."/>
            <person name="Fuma S."/>
            <person name="Galizzi A."/>
            <person name="Galleron N."/>
            <person name="Ghim S.-Y."/>
            <person name="Glaser P."/>
            <person name="Goffeau A."/>
            <person name="Golightly E.J."/>
            <person name="Grandi G."/>
            <person name="Guiseppi G."/>
            <person name="Guy B.J."/>
            <person name="Haga K."/>
            <person name="Haiech J."/>
            <person name="Harwood C.R."/>
            <person name="Henaut A."/>
            <person name="Hilbert H."/>
            <person name="Holsappel S."/>
            <person name="Hosono S."/>
            <person name="Hullo M.-F."/>
            <person name="Itaya M."/>
            <person name="Jones L.-M."/>
            <person name="Joris B."/>
            <person name="Karamata D."/>
            <person name="Kasahara Y."/>
            <person name="Klaerr-Blanchard M."/>
            <person name="Klein C."/>
            <person name="Kobayashi Y."/>
            <person name="Koetter P."/>
            <person name="Koningstein G."/>
            <person name="Krogh S."/>
            <person name="Kumano M."/>
            <person name="Kurita K."/>
            <person name="Lapidus A."/>
            <person name="Lardinois S."/>
            <person name="Lauber J."/>
            <person name="Lazarevic V."/>
            <person name="Lee S.-M."/>
            <person name="Levine A."/>
            <person name="Liu H."/>
            <person name="Masuda S."/>
            <person name="Mauel C."/>
            <person name="Medigue C."/>
            <person name="Medina N."/>
            <person name="Mellado R.P."/>
            <person name="Mizuno M."/>
            <person name="Moestl D."/>
            <person name="Nakai S."/>
            <person name="Noback M."/>
            <person name="Noone D."/>
            <person name="O'Reilly M."/>
            <person name="Ogawa K."/>
            <person name="Ogiwara A."/>
            <person name="Oudega B."/>
            <person name="Park S.-H."/>
            <person name="Parro V."/>
            <person name="Pohl T.M."/>
            <person name="Portetelle D."/>
            <person name="Porwollik S."/>
            <person name="Prescott A.M."/>
            <person name="Presecan E."/>
            <person name="Pujic P."/>
            <person name="Purnelle B."/>
            <person name="Rapoport G."/>
            <person name="Rey M."/>
            <person name="Reynolds S."/>
            <person name="Rieger M."/>
            <person name="Rivolta C."/>
            <person name="Rocha E."/>
            <person name="Roche B."/>
            <person name="Rose M."/>
            <person name="Sadaie Y."/>
            <person name="Sato T."/>
            <person name="Scanlan E."/>
            <person name="Schleich S."/>
            <person name="Schroeter R."/>
            <person name="Scoffone F."/>
            <person name="Sekiguchi J."/>
            <person name="Sekowska A."/>
            <person name="Seror S.J."/>
            <person name="Serror P."/>
            <person name="Shin B.-S."/>
            <person name="Soldo B."/>
            <person name="Sorokin A."/>
            <person name="Tacconi E."/>
            <person name="Takagi T."/>
            <person name="Takahashi H."/>
            <person name="Takemaru K."/>
            <person name="Takeuchi M."/>
            <person name="Tamakoshi A."/>
            <person name="Tanaka T."/>
            <person name="Terpstra P."/>
            <person name="Tognoni A."/>
            <person name="Tosato V."/>
            <person name="Uchiyama S."/>
            <person name="Vandenbol M."/>
            <person name="Vannier F."/>
            <person name="Vassarotti A."/>
            <person name="Viari A."/>
            <person name="Wambutt R."/>
            <person name="Wedler E."/>
            <person name="Wedler H."/>
            <person name="Weitzenegger T."/>
            <person name="Winters P."/>
            <person name="Wipat A."/>
            <person name="Yamamoto H."/>
            <person name="Yamane K."/>
            <person name="Yasumoto K."/>
            <person name="Yata K."/>
            <person name="Yoshida K."/>
            <person name="Yoshikawa H.-F."/>
            <person name="Zumstein E."/>
            <person name="Yoshikawa H."/>
            <person name="Danchin A."/>
        </authorList>
    </citation>
    <scope>NUCLEOTIDE SEQUENCE [LARGE SCALE GENOMIC DNA]</scope>
    <source>
        <strain>168</strain>
    </source>
</reference>
<reference key="3">
    <citation type="journal article" date="1999" name="J. Bacteriol.">
        <title>Regulation of hexuronate utilization in Bacillus subtilis.</title>
        <authorList>
            <person name="Mekjian K.R."/>
            <person name="Bryan E.M."/>
            <person name="Beall B.W."/>
            <person name="Moran C.P. Jr."/>
        </authorList>
    </citation>
    <scope>PROBABLE OPERON STRUCTURE</scope>
    <scope>INDUCTION</scope>
    <source>
        <strain>168 / MB24</strain>
    </source>
</reference>
<accession>O34808</accession>